<sequence length="359" mass="41421">MDLASKDSYIQRLASKVISQPDQERKKKQFAYPQGKRYNGPLNNNKKKGNRKSFKEKDTRGKTPGFPKKSLSSIQPTQKGAANKNGQKAQTQSINGSSTQALEGGNESKFSTVDILRKRLHEKIEESRGQGAPKDALSEAVQAKRAKRKLERERKKRKRKEFRMKELAQQNVEEQQPELKPKAVCESAATKRNVQAIIFNKVEMVEEGYVDKVQKKKNKKQSMKGNITPLTGKNYKQLLSRVEARNAKLEGLREKDEAKARDLEEKIKWTNLLYKAEGIKIKDDEEMLRTALKKKEQKRAQRKKKWAELSGNLAEKMQQRQDKRTRNIQKRKQLKTEKKKNKARKKGRVLPEDLKKAAV</sequence>
<name>SURF6_TAKRU</name>
<organism>
    <name type="scientific">Takifugu rubripes</name>
    <name type="common">Japanese pufferfish</name>
    <name type="synonym">Fugu rubripes</name>
    <dbReference type="NCBI Taxonomy" id="31033"/>
    <lineage>
        <taxon>Eukaryota</taxon>
        <taxon>Metazoa</taxon>
        <taxon>Chordata</taxon>
        <taxon>Craniata</taxon>
        <taxon>Vertebrata</taxon>
        <taxon>Euteleostomi</taxon>
        <taxon>Actinopterygii</taxon>
        <taxon>Neopterygii</taxon>
        <taxon>Teleostei</taxon>
        <taxon>Neoteleostei</taxon>
        <taxon>Acanthomorphata</taxon>
        <taxon>Eupercaria</taxon>
        <taxon>Tetraodontiformes</taxon>
        <taxon>Tetradontoidea</taxon>
        <taxon>Tetraodontidae</taxon>
        <taxon>Takifugu</taxon>
    </lineage>
</organism>
<accession>O57594</accession>
<feature type="chain" id="PRO_0000220971" description="Surfeit locus protein 6 homolog">
    <location>
        <begin position="1"/>
        <end position="359"/>
    </location>
</feature>
<feature type="region of interest" description="Disordered" evidence="2">
    <location>
        <begin position="15"/>
        <end position="106"/>
    </location>
</feature>
<feature type="region of interest" description="Disordered" evidence="2">
    <location>
        <begin position="124"/>
        <end position="160"/>
    </location>
</feature>
<feature type="region of interest" description="Disordered" evidence="2">
    <location>
        <begin position="295"/>
        <end position="359"/>
    </location>
</feature>
<feature type="compositionally biased region" description="Polar residues" evidence="2">
    <location>
        <begin position="70"/>
        <end position="101"/>
    </location>
</feature>
<feature type="compositionally biased region" description="Basic residues" evidence="2">
    <location>
        <begin position="144"/>
        <end position="160"/>
    </location>
</feature>
<feature type="compositionally biased region" description="Basic residues" evidence="2">
    <location>
        <begin position="295"/>
        <end position="305"/>
    </location>
</feature>
<feature type="compositionally biased region" description="Basic residues" evidence="2">
    <location>
        <begin position="326"/>
        <end position="348"/>
    </location>
</feature>
<feature type="compositionally biased region" description="Basic and acidic residues" evidence="2">
    <location>
        <begin position="349"/>
        <end position="359"/>
    </location>
</feature>
<evidence type="ECO:0000250" key="1"/>
<evidence type="ECO:0000256" key="2">
    <source>
        <dbReference type="SAM" id="MobiDB-lite"/>
    </source>
</evidence>
<evidence type="ECO:0000305" key="3"/>
<protein>
    <recommendedName>
        <fullName>Surfeit locus protein 6 homolog</fullName>
    </recommendedName>
</protein>
<comment type="function">
    <text evidence="1">Involved in a nucleolar function.</text>
</comment>
<comment type="subcellular location">
    <subcellularLocation>
        <location evidence="1">Nucleus</location>
        <location evidence="1">Nucleolus</location>
    </subcellularLocation>
</comment>
<comment type="similarity">
    <text evidence="3">Belongs to the SURF6 family.</text>
</comment>
<proteinExistence type="inferred from homology"/>
<reference key="1">
    <citation type="journal article" date="1997" name="Genome Res.">
        <title>The comparative genomic structure and sequence of the surfeit gene homologs in the puffer fish Fugu rubripes and their association with CpG-rich islands.</title>
        <authorList>
            <person name="Armes N."/>
            <person name="Gilley J."/>
            <person name="Fried M."/>
        </authorList>
    </citation>
    <scope>NUCLEOTIDE SEQUENCE [GENOMIC DNA]</scope>
</reference>
<gene>
    <name type="primary">surf6</name>
</gene>
<dbReference type="EMBL" id="Y15171">
    <property type="protein sequence ID" value="CAA75446.1"/>
    <property type="molecule type" value="Genomic_DNA"/>
</dbReference>
<dbReference type="PIR" id="T52091">
    <property type="entry name" value="T52091"/>
</dbReference>
<dbReference type="SMR" id="O57594"/>
<dbReference type="STRING" id="31033.ENSTRUP00000056976"/>
<dbReference type="eggNOG" id="KOG2885">
    <property type="taxonomic scope" value="Eukaryota"/>
</dbReference>
<dbReference type="InParanoid" id="O57594"/>
<dbReference type="Proteomes" id="UP000005226">
    <property type="component" value="Unplaced"/>
</dbReference>
<dbReference type="GO" id="GO:0005730">
    <property type="term" value="C:nucleolus"/>
    <property type="evidence" value="ECO:0007669"/>
    <property type="project" value="UniProtKB-SubCell"/>
</dbReference>
<dbReference type="GO" id="GO:0003677">
    <property type="term" value="F:DNA binding"/>
    <property type="evidence" value="ECO:0007669"/>
    <property type="project" value="TreeGrafter"/>
</dbReference>
<dbReference type="GO" id="GO:0003723">
    <property type="term" value="F:RNA binding"/>
    <property type="evidence" value="ECO:0007669"/>
    <property type="project" value="TreeGrafter"/>
</dbReference>
<dbReference type="GO" id="GO:0042273">
    <property type="term" value="P:ribosomal large subunit biogenesis"/>
    <property type="evidence" value="ECO:0007669"/>
    <property type="project" value="TreeGrafter"/>
</dbReference>
<dbReference type="GO" id="GO:0042274">
    <property type="term" value="P:ribosomal small subunit biogenesis"/>
    <property type="evidence" value="ECO:0007669"/>
    <property type="project" value="TreeGrafter"/>
</dbReference>
<dbReference type="InterPro" id="IPR029190">
    <property type="entry name" value="Rrp14/SURF6_C"/>
</dbReference>
<dbReference type="InterPro" id="IPR007019">
    <property type="entry name" value="SURF6"/>
</dbReference>
<dbReference type="PANTHER" id="PTHR14369">
    <property type="entry name" value="SURFEIT LOCUS PROTEIN 6"/>
    <property type="match status" value="1"/>
</dbReference>
<dbReference type="PANTHER" id="PTHR14369:SF0">
    <property type="entry name" value="SURFEIT LOCUS PROTEIN 6"/>
    <property type="match status" value="1"/>
</dbReference>
<dbReference type="Pfam" id="PF04935">
    <property type="entry name" value="SURF6"/>
    <property type="match status" value="1"/>
</dbReference>
<keyword id="KW-0539">Nucleus</keyword>
<keyword id="KW-1185">Reference proteome</keyword>